<accession>Q9PII2</accession>
<accession>Q0PBJ2</accession>
<organism>
    <name type="scientific">Campylobacter jejuni subsp. jejuni serotype O:2 (strain ATCC 700819 / NCTC 11168)</name>
    <dbReference type="NCBI Taxonomy" id="192222"/>
    <lineage>
        <taxon>Bacteria</taxon>
        <taxon>Pseudomonadati</taxon>
        <taxon>Campylobacterota</taxon>
        <taxon>Epsilonproteobacteria</taxon>
        <taxon>Campylobacterales</taxon>
        <taxon>Campylobacteraceae</taxon>
        <taxon>Campylobacter</taxon>
    </lineage>
</organism>
<dbReference type="EC" id="2.6.1.9" evidence="1"/>
<dbReference type="EMBL" id="AL111168">
    <property type="protein sequence ID" value="CAL34468.1"/>
    <property type="molecule type" value="Genomic_DNA"/>
</dbReference>
<dbReference type="PIR" id="A81451">
    <property type="entry name" value="A81451"/>
</dbReference>
<dbReference type="RefSeq" id="WP_002858650.1">
    <property type="nucleotide sequence ID" value="NZ_SZUC01000004.1"/>
</dbReference>
<dbReference type="RefSeq" id="YP_002343755.1">
    <property type="nucleotide sequence ID" value="NC_002163.1"/>
</dbReference>
<dbReference type="PDB" id="3GET">
    <property type="method" value="X-ray"/>
    <property type="resolution" value="2.01 A"/>
    <property type="chains" value="A/B=1-364"/>
</dbReference>
<dbReference type="PDBsum" id="3GET"/>
<dbReference type="SMR" id="Q9PII2"/>
<dbReference type="STRING" id="192222.Cj0317"/>
<dbReference type="PaxDb" id="192222-Cj0317"/>
<dbReference type="EnsemblBacteria" id="CAL34468">
    <property type="protein sequence ID" value="CAL34468"/>
    <property type="gene ID" value="Cj0317"/>
</dbReference>
<dbReference type="GeneID" id="904641"/>
<dbReference type="KEGG" id="cje:Cj0317"/>
<dbReference type="PATRIC" id="fig|192222.6.peg.309"/>
<dbReference type="eggNOG" id="COG0079">
    <property type="taxonomic scope" value="Bacteria"/>
</dbReference>
<dbReference type="HOGENOM" id="CLU_017584_3_3_7"/>
<dbReference type="OrthoDB" id="9813612at2"/>
<dbReference type="UniPathway" id="UPA00031">
    <property type="reaction ID" value="UER00012"/>
</dbReference>
<dbReference type="EvolutionaryTrace" id="Q9PII2"/>
<dbReference type="Proteomes" id="UP000000799">
    <property type="component" value="Chromosome"/>
</dbReference>
<dbReference type="GO" id="GO:0004400">
    <property type="term" value="F:histidinol-phosphate transaminase activity"/>
    <property type="evidence" value="ECO:0007669"/>
    <property type="project" value="UniProtKB-UniRule"/>
</dbReference>
<dbReference type="GO" id="GO:0030170">
    <property type="term" value="F:pyridoxal phosphate binding"/>
    <property type="evidence" value="ECO:0007669"/>
    <property type="project" value="InterPro"/>
</dbReference>
<dbReference type="GO" id="GO:0000105">
    <property type="term" value="P:L-histidine biosynthetic process"/>
    <property type="evidence" value="ECO:0007669"/>
    <property type="project" value="UniProtKB-UniRule"/>
</dbReference>
<dbReference type="CDD" id="cd00609">
    <property type="entry name" value="AAT_like"/>
    <property type="match status" value="1"/>
</dbReference>
<dbReference type="Gene3D" id="3.90.1150.10">
    <property type="entry name" value="Aspartate Aminotransferase, domain 1"/>
    <property type="match status" value="1"/>
</dbReference>
<dbReference type="Gene3D" id="3.40.640.10">
    <property type="entry name" value="Type I PLP-dependent aspartate aminotransferase-like (Major domain)"/>
    <property type="match status" value="1"/>
</dbReference>
<dbReference type="HAMAP" id="MF_01023">
    <property type="entry name" value="HisC_aminotrans_2"/>
    <property type="match status" value="1"/>
</dbReference>
<dbReference type="InterPro" id="IPR004839">
    <property type="entry name" value="Aminotransferase_I/II_large"/>
</dbReference>
<dbReference type="InterPro" id="IPR005861">
    <property type="entry name" value="HisP_aminotrans"/>
</dbReference>
<dbReference type="InterPro" id="IPR050106">
    <property type="entry name" value="HistidinolP_aminotransfase"/>
</dbReference>
<dbReference type="InterPro" id="IPR015424">
    <property type="entry name" value="PyrdxlP-dep_Trfase"/>
</dbReference>
<dbReference type="InterPro" id="IPR015421">
    <property type="entry name" value="PyrdxlP-dep_Trfase_major"/>
</dbReference>
<dbReference type="InterPro" id="IPR015422">
    <property type="entry name" value="PyrdxlP-dep_Trfase_small"/>
</dbReference>
<dbReference type="NCBIfam" id="TIGR01141">
    <property type="entry name" value="hisC"/>
    <property type="match status" value="1"/>
</dbReference>
<dbReference type="PANTHER" id="PTHR43643:SF3">
    <property type="entry name" value="HISTIDINOL-PHOSPHATE AMINOTRANSFERASE"/>
    <property type="match status" value="1"/>
</dbReference>
<dbReference type="PANTHER" id="PTHR43643">
    <property type="entry name" value="HISTIDINOL-PHOSPHATE AMINOTRANSFERASE 2"/>
    <property type="match status" value="1"/>
</dbReference>
<dbReference type="Pfam" id="PF00155">
    <property type="entry name" value="Aminotran_1_2"/>
    <property type="match status" value="1"/>
</dbReference>
<dbReference type="SUPFAM" id="SSF53383">
    <property type="entry name" value="PLP-dependent transferases"/>
    <property type="match status" value="1"/>
</dbReference>
<gene>
    <name evidence="1" type="primary">hisC</name>
    <name type="ordered locus">Cj0317</name>
</gene>
<reference key="1">
    <citation type="journal article" date="2000" name="Nature">
        <title>The genome sequence of the food-borne pathogen Campylobacter jejuni reveals hypervariable sequences.</title>
        <authorList>
            <person name="Parkhill J."/>
            <person name="Wren B.W."/>
            <person name="Mungall K.L."/>
            <person name="Ketley J.M."/>
            <person name="Churcher C.M."/>
            <person name="Basham D."/>
            <person name="Chillingworth T."/>
            <person name="Davies R.M."/>
            <person name="Feltwell T."/>
            <person name="Holroyd S."/>
            <person name="Jagels K."/>
            <person name="Karlyshev A.V."/>
            <person name="Moule S."/>
            <person name="Pallen M.J."/>
            <person name="Penn C.W."/>
            <person name="Quail M.A."/>
            <person name="Rajandream M.A."/>
            <person name="Rutherford K.M."/>
            <person name="van Vliet A.H.M."/>
            <person name="Whitehead S."/>
            <person name="Barrell B.G."/>
        </authorList>
    </citation>
    <scope>NUCLEOTIDE SEQUENCE [LARGE SCALE GENOMIC DNA]</scope>
    <source>
        <strain>ATCC 700819 / NCTC 11168</strain>
    </source>
</reference>
<feature type="chain" id="PRO_0000153340" description="Histidinol-phosphate aminotransferase">
    <location>
        <begin position="1"/>
        <end position="364"/>
    </location>
</feature>
<feature type="modified residue" description="N6-(pyridoxal phosphate)lysine" evidence="1">
    <location>
        <position position="226"/>
    </location>
</feature>
<feature type="helix" evidence="2">
    <location>
        <begin position="5"/>
        <end position="9"/>
    </location>
</feature>
<feature type="helix" evidence="2">
    <location>
        <begin position="19"/>
        <end position="25"/>
    </location>
</feature>
<feature type="helix" evidence="2">
    <location>
        <begin position="45"/>
        <end position="54"/>
    </location>
</feature>
<feature type="helix" evidence="2">
    <location>
        <begin position="55"/>
        <end position="57"/>
    </location>
</feature>
<feature type="helix" evidence="2">
    <location>
        <begin position="67"/>
        <end position="77"/>
    </location>
</feature>
<feature type="helix" evidence="2">
    <location>
        <begin position="81"/>
        <end position="83"/>
    </location>
</feature>
<feature type="strand" evidence="2">
    <location>
        <begin position="84"/>
        <end position="89"/>
    </location>
</feature>
<feature type="helix" evidence="2">
    <location>
        <begin position="90"/>
        <end position="101"/>
    </location>
</feature>
<feature type="strand" evidence="2">
    <location>
        <begin position="107"/>
        <end position="110"/>
    </location>
</feature>
<feature type="helix" evidence="2">
    <location>
        <begin position="117"/>
        <end position="125"/>
    </location>
</feature>
<feature type="strand" evidence="2">
    <location>
        <begin position="128"/>
        <end position="131"/>
    </location>
</feature>
<feature type="strand" evidence="2">
    <location>
        <begin position="133"/>
        <end position="136"/>
    </location>
</feature>
<feature type="helix" evidence="2">
    <location>
        <begin position="139"/>
        <end position="148"/>
    </location>
</feature>
<feature type="turn" evidence="2">
    <location>
        <begin position="149"/>
        <end position="152"/>
    </location>
</feature>
<feature type="strand" evidence="2">
    <location>
        <begin position="153"/>
        <end position="161"/>
    </location>
</feature>
<feature type="turn" evidence="2">
    <location>
        <begin position="163"/>
        <end position="165"/>
    </location>
</feature>
<feature type="helix" evidence="2">
    <location>
        <begin position="171"/>
        <end position="179"/>
    </location>
</feature>
<feature type="strand" evidence="2">
    <location>
        <begin position="185"/>
        <end position="190"/>
    </location>
</feature>
<feature type="helix" evidence="2">
    <location>
        <begin position="194"/>
        <end position="200"/>
    </location>
</feature>
<feature type="helix" evidence="2">
    <location>
        <begin position="202"/>
        <end position="204"/>
    </location>
</feature>
<feature type="helix" evidence="2">
    <location>
        <begin position="208"/>
        <end position="214"/>
    </location>
</feature>
<feature type="strand" evidence="2">
    <location>
        <begin position="218"/>
        <end position="223"/>
    </location>
</feature>
<feature type="turn" evidence="2">
    <location>
        <begin position="231"/>
        <end position="233"/>
    </location>
</feature>
<feature type="strand" evidence="2">
    <location>
        <begin position="236"/>
        <end position="240"/>
    </location>
</feature>
<feature type="helix" evidence="2">
    <location>
        <begin position="242"/>
        <end position="251"/>
    </location>
</feature>
<feature type="helix" evidence="2">
    <location>
        <begin position="259"/>
        <end position="269"/>
    </location>
</feature>
<feature type="helix" evidence="2">
    <location>
        <begin position="272"/>
        <end position="295"/>
    </location>
</feature>
<feature type="strand" evidence="2">
    <location>
        <begin position="304"/>
        <end position="311"/>
    </location>
</feature>
<feature type="strand" evidence="2">
    <location>
        <begin position="313"/>
        <end position="315"/>
    </location>
</feature>
<feature type="helix" evidence="2">
    <location>
        <begin position="317"/>
        <end position="325"/>
    </location>
</feature>
<feature type="turn" evidence="2">
    <location>
        <begin position="326"/>
        <end position="328"/>
    </location>
</feature>
<feature type="helix" evidence="2">
    <location>
        <begin position="335"/>
        <end position="337"/>
    </location>
</feature>
<feature type="strand" evidence="2">
    <location>
        <begin position="340"/>
        <end position="345"/>
    </location>
</feature>
<feature type="helix" evidence="2">
    <location>
        <begin position="349"/>
        <end position="363"/>
    </location>
</feature>
<comment type="catalytic activity">
    <reaction evidence="1">
        <text>L-histidinol phosphate + 2-oxoglutarate = 3-(imidazol-4-yl)-2-oxopropyl phosphate + L-glutamate</text>
        <dbReference type="Rhea" id="RHEA:23744"/>
        <dbReference type="ChEBI" id="CHEBI:16810"/>
        <dbReference type="ChEBI" id="CHEBI:29985"/>
        <dbReference type="ChEBI" id="CHEBI:57766"/>
        <dbReference type="ChEBI" id="CHEBI:57980"/>
        <dbReference type="EC" id="2.6.1.9"/>
    </reaction>
</comment>
<comment type="cofactor">
    <cofactor evidence="1">
        <name>pyridoxal 5'-phosphate</name>
        <dbReference type="ChEBI" id="CHEBI:597326"/>
    </cofactor>
</comment>
<comment type="pathway">
    <text evidence="1">Amino-acid biosynthesis; L-histidine biosynthesis; L-histidine from 5-phospho-alpha-D-ribose 1-diphosphate: step 7/9.</text>
</comment>
<comment type="subunit">
    <text evidence="1">Homodimer.</text>
</comment>
<comment type="similarity">
    <text evidence="1">Belongs to the class-II pyridoxal-phosphate-dependent aminotransferase family. Histidinol-phosphate aminotransferase subfamily.</text>
</comment>
<sequence length="364" mass="41368">MKFNEFLNNLSNYEPGKDIEVIAKEYGVKEVIKLASNENPFGTPPKAIECLRQNANKAHLYPDDSMIELKSTLAQKYKVQNENIIIGAGSDQVIEFAIHSKLNSKNAFLQAGVTFAMYEIYAKQCGAKCYKTQSITHNLDEFKKLYETHKDEIKLIFLCLPNNPLGECLDASEATEFIKGVNEDCLVVIDAAYNEFASFKDSKKHLEPCELIKEFDNVLYLGTFSKLYGLGGLRIGYGIANANIISAFYKLRAPFNVSNLALKAAVAAMDDDEFTEKTLENNFSQMELYKEFAKKHNIKIIDSYTNFITYFFDEKNSTDLSEKLLKKGIIIRNLKSYGLNAIRITIGTSYENEKFFTEFDKILR</sequence>
<keyword id="KW-0002">3D-structure</keyword>
<keyword id="KW-0028">Amino-acid biosynthesis</keyword>
<keyword id="KW-0032">Aminotransferase</keyword>
<keyword id="KW-0368">Histidine biosynthesis</keyword>
<keyword id="KW-0663">Pyridoxal phosphate</keyword>
<keyword id="KW-1185">Reference proteome</keyword>
<keyword id="KW-0808">Transferase</keyword>
<protein>
    <recommendedName>
        <fullName evidence="1">Histidinol-phosphate aminotransferase</fullName>
        <ecNumber evidence="1">2.6.1.9</ecNumber>
    </recommendedName>
    <alternativeName>
        <fullName evidence="1">Imidazole acetol-phosphate transaminase</fullName>
    </alternativeName>
</protein>
<proteinExistence type="evidence at protein level"/>
<name>HIS8_CAMJE</name>
<evidence type="ECO:0000255" key="1">
    <source>
        <dbReference type="HAMAP-Rule" id="MF_01023"/>
    </source>
</evidence>
<evidence type="ECO:0007829" key="2">
    <source>
        <dbReference type="PDB" id="3GET"/>
    </source>
</evidence>